<proteinExistence type="inferred from homology"/>
<feature type="signal peptide" evidence="2">
    <location>
        <begin position="1"/>
        <end position="23"/>
    </location>
</feature>
<feature type="chain" id="PRO_0000289894" description="Non-structural protein 7a">
    <location>
        <begin position="24"/>
        <end position="101"/>
    </location>
</feature>
<feature type="transmembrane region" description="Helical" evidence="2">
    <location>
        <begin position="81"/>
        <end position="101"/>
    </location>
</feature>
<comment type="function">
    <text evidence="1">May function in the formation of membrane-bound replication complexes or in the assembly of the virus.</text>
</comment>
<comment type="subcellular location">
    <subcellularLocation>
        <location evidence="3">Host membrane</location>
        <topology evidence="3">Single-pass membrane protein</topology>
    </subcellularLocation>
</comment>
<comment type="similarity">
    <text evidence="3">Belongs to the coronaviruses ns7/ns7a protein family.</text>
</comment>
<reference key="1">
    <citation type="journal article" date="2004" name="Virus Res.">
        <title>Molecular characterization of a virulent canine coronavirus BGF strain.</title>
        <authorList>
            <person name="Sanchez-Morgado J.M."/>
            <person name="Poynter S."/>
            <person name="Morris T.H."/>
        </authorList>
    </citation>
    <scope>NUCLEOTIDE SEQUENCE [GENOMIC RNA]</scope>
</reference>
<organismHost>
    <name type="scientific">Canis lupus familiaris</name>
    <name type="common">Dog</name>
    <name type="synonym">Canis familiaris</name>
    <dbReference type="NCBI Taxonomy" id="9615"/>
</organismHost>
<evidence type="ECO:0000250" key="1"/>
<evidence type="ECO:0000255" key="2"/>
<evidence type="ECO:0000305" key="3"/>
<name>NS7_CVCBG</name>
<dbReference type="EMBL" id="AY342160">
    <property type="protein sequence ID" value="AAQ17226.1"/>
    <property type="molecule type" value="Genomic_RNA"/>
</dbReference>
<dbReference type="GO" id="GO:0033644">
    <property type="term" value="C:host cell membrane"/>
    <property type="evidence" value="ECO:0007669"/>
    <property type="project" value="UniProtKB-SubCell"/>
</dbReference>
<dbReference type="GO" id="GO:0016020">
    <property type="term" value="C:membrane"/>
    <property type="evidence" value="ECO:0007669"/>
    <property type="project" value="UniProtKB-KW"/>
</dbReference>
<dbReference type="InterPro" id="IPR003449">
    <property type="entry name" value="Corona_7"/>
</dbReference>
<dbReference type="Pfam" id="PF02398">
    <property type="entry name" value="Corona_7"/>
    <property type="match status" value="1"/>
</dbReference>
<accession>Q7T6S7</accession>
<organism>
    <name type="scientific">Canine coronavirus (strain BGF10)</name>
    <name type="common">CCoV</name>
    <name type="synonym">Canine enteric coronavirus</name>
    <dbReference type="NCBI Taxonomy" id="441619"/>
    <lineage>
        <taxon>Viruses</taxon>
        <taxon>Riboviria</taxon>
        <taxon>Orthornavirae</taxon>
        <taxon>Pisuviricota</taxon>
        <taxon>Pisoniviricetes</taxon>
        <taxon>Nidovirales</taxon>
        <taxon>Cornidovirineae</taxon>
        <taxon>Coronaviridae</taxon>
        <taxon>Orthocoronavirinae</taxon>
        <taxon>Alphacoronavirus</taxon>
        <taxon>Tegacovirus</taxon>
        <taxon>Alphacoronavirus 1</taxon>
    </lineage>
</organism>
<sequence length="101" mass="11511">MLVFLHAVFVTVLILLLIGRLQLLERLLLNHSLNLKTVNNVLGVTDTGLKVNCLQLLKPDCLDFNILYRSLAETRLLKVVLRVIFLVLLGFCCHRLLVTLF</sequence>
<protein>
    <recommendedName>
        <fullName>Non-structural protein 7a</fullName>
        <shortName>ns7a</shortName>
    </recommendedName>
    <alternativeName>
        <fullName>11 kDa protein</fullName>
    </alternativeName>
    <alternativeName>
        <fullName>Accessory protein 7a</fullName>
    </alternativeName>
    <alternativeName>
        <fullName>X3 protein</fullName>
    </alternativeName>
</protein>
<gene>
    <name type="ORF">7a</name>
</gene>
<keyword id="KW-1043">Host membrane</keyword>
<keyword id="KW-0472">Membrane</keyword>
<keyword id="KW-0732">Signal</keyword>
<keyword id="KW-0812">Transmembrane</keyword>
<keyword id="KW-1133">Transmembrane helix</keyword>